<protein>
    <recommendedName>
        <fullName evidence="8">Medium-chain acyl-CoA ligase Mig</fullName>
        <ecNumber evidence="2 3">6.2.1.2</ecNumber>
    </recommendedName>
    <alternativeName>
        <fullName evidence="7">Macrophage-induced gene</fullName>
    </alternativeName>
    <alternativeName>
        <fullName evidence="6">Medium-chain fatty acid acyl-CoA synthetase</fullName>
    </alternativeName>
</protein>
<reference key="1">
    <citation type="journal article" date="1997" name="Infect. Immun.">
        <title>Cloning, sequencing, and expression of the mig gene of Mycobacterium avium, which codes for a secreted macrophage-induced protein.</title>
        <authorList>
            <person name="Plum G."/>
            <person name="Brenden M."/>
            <person name="Clark-Curtiss J.E."/>
            <person name="Pulverer G."/>
        </authorList>
    </citation>
    <scope>NUCLEOTIDE SEQUENCE [GENOMIC DNA]</scope>
    <scope>SUBCELLULAR LOCATION</scope>
    <scope>INDUCTION</scope>
    <source>
        <strain>#5-8</strain>
    </source>
</reference>
<reference key="2">
    <citation type="submission" date="2017-08" db="EMBL/GenBank/DDBJ databases">
        <title>Phylogenetic analysis of Mycobacterium avium complex whole genomes.</title>
        <authorList>
            <person name="Caverly L.J."/>
            <person name="Spilker T."/>
            <person name="Lipuma J."/>
        </authorList>
    </citation>
    <scope>NUCLEOTIDE SEQUENCE [LARGE SCALE GENOMIC DNA]</scope>
    <source>
        <strain>FLAC0165</strain>
    </source>
</reference>
<reference key="3">
    <citation type="journal article" date="1994" name="Infect. Immun.">
        <title>Induction of Mycobacterium avium gene expression following phagocytosis by human macrophages.</title>
        <authorList>
            <person name="Plum G."/>
            <person name="Clark-Curtiss J.E."/>
        </authorList>
    </citation>
    <scope>INDUCTION</scope>
    <source>
        <strain>#5-8</strain>
    </source>
</reference>
<reference key="4">
    <citation type="journal article" date="2001" name="Biochim. Biophys. Acta">
        <title>The macrophage-induced gene (mig) of Mycobacterium avium encodes a medium-chain acyl-coenzyme A synthetase.</title>
        <authorList>
            <person name="Morsczeck C."/>
            <person name="Berger S."/>
            <person name="Plum G."/>
        </authorList>
    </citation>
    <scope>FUNCTION</scope>
    <scope>CATALYTIC ACTIVITY</scope>
    <scope>ACTIVITY REGULATION</scope>
    <scope>BIOPHYSICOCHEMICAL PROPERTIES</scope>
    <scope>PATHWAY</scope>
    <scope>IDENTIFICATION OF FRAMESHIFT</scope>
    <source>
        <strain>#5-8</strain>
    </source>
</reference>
<reference key="5">
    <citation type="journal article" date="2009" name="Chem. Biol.">
        <title>The dual function of the Mycobacterium tuberculosis FadD32 required for mycolic acid biosynthesis.</title>
        <authorList>
            <person name="Leger M."/>
            <person name="Gavalda S."/>
            <person name="Guillet V."/>
            <person name="van der Rest B."/>
            <person name="Slama N."/>
            <person name="Montrozier H."/>
            <person name="Mourey L."/>
            <person name="Quemard A."/>
            <person name="Daffe M."/>
            <person name="Marrakchi H."/>
        </authorList>
    </citation>
    <scope>FUNCTION</scope>
    <scope>CATALYTIC ACTIVITY</scope>
</reference>
<accession>O33855</accession>
<proteinExistence type="evidence at protein level"/>
<keyword id="KW-0067">ATP-binding</keyword>
<keyword id="KW-0134">Cell wall</keyword>
<keyword id="KW-0276">Fatty acid metabolism</keyword>
<keyword id="KW-0436">Ligase</keyword>
<keyword id="KW-0443">Lipid metabolism</keyword>
<keyword id="KW-0547">Nucleotide-binding</keyword>
<keyword id="KW-0964">Secreted</keyword>
<keyword id="KW-0732">Signal</keyword>
<name>MIG_MYCAV</name>
<gene>
    <name evidence="7" type="primary">mig</name>
    <name evidence="9" type="ORF">CKJ66_15745</name>
</gene>
<dbReference type="EC" id="6.2.1.2" evidence="2 3"/>
<dbReference type="EMBL" id="U43598">
    <property type="protein sequence ID" value="AAB87139.2"/>
    <property type="molecule type" value="Genomic_DNA"/>
</dbReference>
<dbReference type="EMBL" id="NSFD01000040">
    <property type="protein sequence ID" value="PBA25886.1"/>
    <property type="molecule type" value="Genomic_DNA"/>
</dbReference>
<dbReference type="RefSeq" id="WP_033717924.1">
    <property type="nucleotide sequence ID" value="NZ_NSFM01000003.1"/>
</dbReference>
<dbReference type="SMR" id="O33855"/>
<dbReference type="SwissLipids" id="SLP:000000974"/>
<dbReference type="UniPathway" id="UPA00199"/>
<dbReference type="Proteomes" id="UP000217768">
    <property type="component" value="Unassembled WGS sequence"/>
</dbReference>
<dbReference type="GO" id="GO:0005576">
    <property type="term" value="C:extracellular region"/>
    <property type="evidence" value="ECO:0007669"/>
    <property type="project" value="UniProtKB-KW"/>
</dbReference>
<dbReference type="GO" id="GO:0005524">
    <property type="term" value="F:ATP binding"/>
    <property type="evidence" value="ECO:0007669"/>
    <property type="project" value="UniProtKB-KW"/>
</dbReference>
<dbReference type="GO" id="GO:0031956">
    <property type="term" value="F:medium-chain fatty acid-CoA ligase activity"/>
    <property type="evidence" value="ECO:0007669"/>
    <property type="project" value="UniProtKB-EC"/>
</dbReference>
<dbReference type="GO" id="GO:0006631">
    <property type="term" value="P:fatty acid metabolic process"/>
    <property type="evidence" value="ECO:0007669"/>
    <property type="project" value="UniProtKB-UniPathway"/>
</dbReference>
<dbReference type="CDD" id="cd05924">
    <property type="entry name" value="FACL_like_5"/>
    <property type="match status" value="1"/>
</dbReference>
<dbReference type="Gene3D" id="3.30.300.30">
    <property type="match status" value="1"/>
</dbReference>
<dbReference type="Gene3D" id="3.40.50.12780">
    <property type="entry name" value="N-terminal domain of ligase-like"/>
    <property type="match status" value="1"/>
</dbReference>
<dbReference type="InterPro" id="IPR025110">
    <property type="entry name" value="AMP-bd_C"/>
</dbReference>
<dbReference type="InterPro" id="IPR045851">
    <property type="entry name" value="AMP-bd_C_sf"/>
</dbReference>
<dbReference type="InterPro" id="IPR020845">
    <property type="entry name" value="AMP-binding_CS"/>
</dbReference>
<dbReference type="InterPro" id="IPR000873">
    <property type="entry name" value="AMP-dep_synth/lig_dom"/>
</dbReference>
<dbReference type="InterPro" id="IPR042099">
    <property type="entry name" value="ANL_N_sf"/>
</dbReference>
<dbReference type="InterPro" id="IPR050237">
    <property type="entry name" value="ATP-dep_AMP-bd_enzyme"/>
</dbReference>
<dbReference type="NCBIfam" id="NF005863">
    <property type="entry name" value="PRK07798.1"/>
    <property type="match status" value="1"/>
</dbReference>
<dbReference type="PANTHER" id="PTHR43767">
    <property type="entry name" value="LONG-CHAIN-FATTY-ACID--COA LIGASE"/>
    <property type="match status" value="1"/>
</dbReference>
<dbReference type="PANTHER" id="PTHR43767:SF1">
    <property type="entry name" value="NONRIBOSOMAL PEPTIDE SYNTHASE PES1 (EUROFUNG)-RELATED"/>
    <property type="match status" value="1"/>
</dbReference>
<dbReference type="Pfam" id="PF00501">
    <property type="entry name" value="AMP-binding"/>
    <property type="match status" value="1"/>
</dbReference>
<dbReference type="Pfam" id="PF13193">
    <property type="entry name" value="AMP-binding_C"/>
    <property type="match status" value="1"/>
</dbReference>
<dbReference type="SUPFAM" id="SSF56801">
    <property type="entry name" value="Acetyl-CoA synthetase-like"/>
    <property type="match status" value="1"/>
</dbReference>
<dbReference type="PROSITE" id="PS00455">
    <property type="entry name" value="AMP_BINDING"/>
    <property type="match status" value="1"/>
</dbReference>
<organism>
    <name type="scientific">Mycobacterium avium</name>
    <dbReference type="NCBI Taxonomy" id="1764"/>
    <lineage>
        <taxon>Bacteria</taxon>
        <taxon>Bacillati</taxon>
        <taxon>Actinomycetota</taxon>
        <taxon>Actinomycetes</taxon>
        <taxon>Mycobacteriales</taxon>
        <taxon>Mycobacteriaceae</taxon>
        <taxon>Mycobacterium</taxon>
        <taxon>Mycobacterium avium complex (MAC)</taxon>
    </lineage>
</organism>
<feature type="signal peptide" evidence="1">
    <location>
        <begin position="1"/>
        <end position="19"/>
    </location>
</feature>
<feature type="chain" id="PRO_0000451972" description="Medium-chain acyl-CoA ligase Mig" evidence="1">
    <location>
        <begin position="20"/>
        <end position="550"/>
    </location>
</feature>
<evidence type="ECO:0000255" key="1"/>
<evidence type="ECO:0000269" key="2">
    <source>
    </source>
</evidence>
<evidence type="ECO:0000269" key="3">
    <source>
    </source>
</evidence>
<evidence type="ECO:0000269" key="4">
    <source>
    </source>
</evidence>
<evidence type="ECO:0000269" key="5">
    <source>
    </source>
</evidence>
<evidence type="ECO:0000303" key="6">
    <source>
    </source>
</evidence>
<evidence type="ECO:0000303" key="7">
    <source>
    </source>
</evidence>
<evidence type="ECO:0000305" key="8"/>
<evidence type="ECO:0000312" key="9">
    <source>
        <dbReference type="EMBL" id="PBA25886.1"/>
    </source>
</evidence>
<comment type="function">
    <text evidence="2 3">Catalyzes the activation of medium-chain fatty acids as acyl-coenzyme A (acyl-CoA) (PubMed:11690636, PubMed:19477415). Shows maximal activity with saturated fatty acids of medium-chain length between C6 and C12. Has lower activity with tridecanoic acid (C13), tetradecanoic acid (C14) and with unsaturated fatty acids like oleic acid (C18:1), linolenic acid (C18:3) and arachidonic acid (C20:4). Shows weak activity with some aromatic carbon acids (PubMed:11690636). Involved in the metabolism of fatty acid during mycobacterial survival in macrophages (PubMed:11690636).</text>
</comment>
<comment type="catalytic activity">
    <reaction evidence="2 3">
        <text>a medium-chain fatty acid + ATP + CoA = a medium-chain fatty acyl-CoA + AMP + diphosphate</text>
        <dbReference type="Rhea" id="RHEA:48340"/>
        <dbReference type="ChEBI" id="CHEBI:30616"/>
        <dbReference type="ChEBI" id="CHEBI:33019"/>
        <dbReference type="ChEBI" id="CHEBI:57287"/>
        <dbReference type="ChEBI" id="CHEBI:59558"/>
        <dbReference type="ChEBI" id="CHEBI:90546"/>
        <dbReference type="ChEBI" id="CHEBI:456215"/>
        <dbReference type="EC" id="6.2.1.2"/>
    </reaction>
    <physiologicalReaction direction="left-to-right" evidence="2 3">
        <dbReference type="Rhea" id="RHEA:48341"/>
    </physiologicalReaction>
</comment>
<comment type="catalytic activity">
    <reaction evidence="2">
        <text>hexanoate + ATP + CoA = hexanoyl-CoA + AMP + diphosphate</text>
        <dbReference type="Rhea" id="RHEA:43740"/>
        <dbReference type="ChEBI" id="CHEBI:17120"/>
        <dbReference type="ChEBI" id="CHEBI:30616"/>
        <dbReference type="ChEBI" id="CHEBI:33019"/>
        <dbReference type="ChEBI" id="CHEBI:57287"/>
        <dbReference type="ChEBI" id="CHEBI:62620"/>
        <dbReference type="ChEBI" id="CHEBI:456215"/>
    </reaction>
    <physiologicalReaction direction="left-to-right" evidence="2">
        <dbReference type="Rhea" id="RHEA:43741"/>
    </physiologicalReaction>
</comment>
<comment type="catalytic activity">
    <reaction evidence="2">
        <text>heptanoate + ATP + CoA = heptanoyl-CoA + AMP + diphosphate</text>
        <dbReference type="Rhea" id="RHEA:44088"/>
        <dbReference type="ChEBI" id="CHEBI:30616"/>
        <dbReference type="ChEBI" id="CHEBI:32362"/>
        <dbReference type="ChEBI" id="CHEBI:33019"/>
        <dbReference type="ChEBI" id="CHEBI:57287"/>
        <dbReference type="ChEBI" id="CHEBI:78811"/>
        <dbReference type="ChEBI" id="CHEBI:456215"/>
    </reaction>
    <physiologicalReaction direction="left-to-right" evidence="2">
        <dbReference type="Rhea" id="RHEA:44089"/>
    </physiologicalReaction>
</comment>
<comment type="catalytic activity">
    <reaction evidence="2 3">
        <text>octanoate + ATP + CoA = octanoyl-CoA + AMP + diphosphate</text>
        <dbReference type="Rhea" id="RHEA:33631"/>
        <dbReference type="ChEBI" id="CHEBI:25646"/>
        <dbReference type="ChEBI" id="CHEBI:30616"/>
        <dbReference type="ChEBI" id="CHEBI:33019"/>
        <dbReference type="ChEBI" id="CHEBI:57287"/>
        <dbReference type="ChEBI" id="CHEBI:57386"/>
        <dbReference type="ChEBI" id="CHEBI:456215"/>
    </reaction>
    <physiologicalReaction direction="left-to-right" evidence="2 3">
        <dbReference type="Rhea" id="RHEA:33632"/>
    </physiologicalReaction>
</comment>
<comment type="catalytic activity">
    <reaction evidence="2">
        <text>decanoate + ATP + CoA = decanoyl-CoA + AMP + diphosphate</text>
        <dbReference type="Rhea" id="RHEA:33627"/>
        <dbReference type="ChEBI" id="CHEBI:27689"/>
        <dbReference type="ChEBI" id="CHEBI:30616"/>
        <dbReference type="ChEBI" id="CHEBI:33019"/>
        <dbReference type="ChEBI" id="CHEBI:57287"/>
        <dbReference type="ChEBI" id="CHEBI:61430"/>
        <dbReference type="ChEBI" id="CHEBI:456215"/>
    </reaction>
    <physiologicalReaction direction="left-to-right" evidence="2">
        <dbReference type="Rhea" id="RHEA:33628"/>
    </physiologicalReaction>
</comment>
<comment type="catalytic activity">
    <reaction evidence="2 3">
        <text>dodecanoate + ATP + CoA = dodecanoyl-CoA + AMP + diphosphate</text>
        <dbReference type="Rhea" id="RHEA:33623"/>
        <dbReference type="ChEBI" id="CHEBI:18262"/>
        <dbReference type="ChEBI" id="CHEBI:30616"/>
        <dbReference type="ChEBI" id="CHEBI:33019"/>
        <dbReference type="ChEBI" id="CHEBI:57287"/>
        <dbReference type="ChEBI" id="CHEBI:57375"/>
        <dbReference type="ChEBI" id="CHEBI:456215"/>
    </reaction>
    <physiologicalReaction direction="left-to-right" evidence="2 3">
        <dbReference type="Rhea" id="RHEA:33624"/>
    </physiologicalReaction>
</comment>
<comment type="catalytic activity">
    <reaction evidence="2 3">
        <text>tetradecanoate + ATP + CoA = tetradecanoyl-CoA + AMP + diphosphate</text>
        <dbReference type="Rhea" id="RHEA:33619"/>
        <dbReference type="ChEBI" id="CHEBI:30616"/>
        <dbReference type="ChEBI" id="CHEBI:30807"/>
        <dbReference type="ChEBI" id="CHEBI:33019"/>
        <dbReference type="ChEBI" id="CHEBI:57287"/>
        <dbReference type="ChEBI" id="CHEBI:57385"/>
        <dbReference type="ChEBI" id="CHEBI:456215"/>
    </reaction>
    <physiologicalReaction direction="left-to-right" evidence="2 3">
        <dbReference type="Rhea" id="RHEA:33620"/>
    </physiologicalReaction>
</comment>
<comment type="catalytic activity">
    <reaction evidence="2">
        <text>(9Z)-octadecenoate + ATP + CoA = (9Z)-octadecenoyl-CoA + AMP + diphosphate</text>
        <dbReference type="Rhea" id="RHEA:33607"/>
        <dbReference type="ChEBI" id="CHEBI:30616"/>
        <dbReference type="ChEBI" id="CHEBI:30823"/>
        <dbReference type="ChEBI" id="CHEBI:33019"/>
        <dbReference type="ChEBI" id="CHEBI:57287"/>
        <dbReference type="ChEBI" id="CHEBI:57387"/>
        <dbReference type="ChEBI" id="CHEBI:456215"/>
    </reaction>
    <physiologicalReaction direction="left-to-right" evidence="2">
        <dbReference type="Rhea" id="RHEA:33608"/>
    </physiologicalReaction>
</comment>
<comment type="catalytic activity">
    <reaction evidence="2">
        <text>(9Z,12Z,15Z)-octadecatrienoate + ATP + CoA = (9Z,12Z,15Z)-octadecatrienoyl-CoA + AMP + diphosphate</text>
        <dbReference type="Rhea" id="RHEA:44936"/>
        <dbReference type="ChEBI" id="CHEBI:30616"/>
        <dbReference type="ChEBI" id="CHEBI:32387"/>
        <dbReference type="ChEBI" id="CHEBI:33019"/>
        <dbReference type="ChEBI" id="CHEBI:57287"/>
        <dbReference type="ChEBI" id="CHEBI:74034"/>
        <dbReference type="ChEBI" id="CHEBI:456215"/>
    </reaction>
    <physiologicalReaction direction="left-to-right" evidence="2">
        <dbReference type="Rhea" id="RHEA:44937"/>
    </physiologicalReaction>
</comment>
<comment type="catalytic activity">
    <reaction evidence="2">
        <text>(5Z,8Z,11Z,14Z)-eicosatetraenoate + ATP + CoA = (5Z,8Z,11Z,14Z)-eicosatetraenoyl-CoA + AMP + diphosphate</text>
        <dbReference type="Rhea" id="RHEA:19713"/>
        <dbReference type="ChEBI" id="CHEBI:30616"/>
        <dbReference type="ChEBI" id="CHEBI:32395"/>
        <dbReference type="ChEBI" id="CHEBI:33019"/>
        <dbReference type="ChEBI" id="CHEBI:57287"/>
        <dbReference type="ChEBI" id="CHEBI:57368"/>
        <dbReference type="ChEBI" id="CHEBI:456215"/>
    </reaction>
    <physiologicalReaction direction="left-to-right" evidence="2">
        <dbReference type="Rhea" id="RHEA:19714"/>
    </physiologicalReaction>
</comment>
<comment type="activity regulation">
    <text evidence="2">Inhibited by 2-hydroxydodecanoic acid, a typical inhibitor of medium-chain acyl-CoA synthetases.</text>
</comment>
<comment type="biophysicochemical properties">
    <kinetics>
        <KM evidence="2">285 uM for octanoic acid</KM>
        <KM evidence="2">1775 uM for decanoic acid</KM>
        <KM evidence="2">20 uM for dodecanoic acid</KM>
        <KM evidence="2">36 uM for ATP</KM>
        <KM evidence="2">45 uM for CoA</KM>
        <Vmax evidence="2">183.0 nmol/min/mg enzyme with octanoic acid as substrate</Vmax>
        <Vmax evidence="2">510.0 nmol/min/mg enzyme with decanoic acid as substrate</Vmax>
        <Vmax evidence="2">163.0 nmol/min/mg enzyme with dodecanoic acid as substrate</Vmax>
    </kinetics>
</comment>
<comment type="pathway">
    <text evidence="2">Lipid metabolism; fatty acid metabolism.</text>
</comment>
<comment type="subcellular location">
    <subcellularLocation>
        <location evidence="5">Secreted</location>
        <location evidence="5">Cell wall</location>
    </subcellularLocation>
</comment>
<comment type="induction">
    <text evidence="4 5">Expression is induced in human macrophages (PubMed:7507894, PubMed:9353032). Induced by acidity (PubMed:9353032). Transcription seems to be maximal between day 1 and day 5 after phagocytosis (PubMed:7507894).</text>
</comment>
<comment type="similarity">
    <text evidence="8">Belongs to the ATP-dependent AMP-binding enzyme family.</text>
</comment>
<sequence>MSDTTTAFTVPAVAKAVAAAIPDRELIIQGDRRYTYRQVIERSNRLAAYLHSQGLGCHTEREALAGHEVGQDLLGLYAYNGNEFVEALLGAFAARVAPFNVNFRYVKSELHYLLADSEATALIYHAAFAPRVAEILPELPRLRVLIQIADESGNELLDGAVDYEDALASVSAQPPPVRHCPDDLYVLYTGGTTGMPKGVLWRQHDIFMTSFGGRNLMTGEPSSSIDEIVQRAASGPGTKLMILPPLIHGAAQWSVMTAITTGQTVVFPTVVDHLDAEDVVRTIEREKVMVVTVVGDAMARPLVAAIEKGIADVSSLAVVANGGALLTPFVKQRLIEVLPNAVVVDGVGSSETGAQMHHMSTPGAVATGTFNAGPDTFVAAEDLSAILPPGHEGMGWLAQRGYVPLGYKGDAAKTAKTFPVIDGVRYAVPGDRARHHADGHIELLGRDSVCINSGGEKIFVEEVETAIASHPAVADVVVAGRPSERWGQEVVAVVALSDGAAVDAGELIAHASNSLARYKLPKAIVFRPVIERSPSGKADYRWAREQAVNG</sequence>